<dbReference type="EC" id="3.6.4.12" evidence="1 2"/>
<dbReference type="EMBL" id="DS027688">
    <property type="protein sequence ID" value="EAW23448.1"/>
    <property type="molecule type" value="Genomic_DNA"/>
</dbReference>
<dbReference type="RefSeq" id="XP_001265345.1">
    <property type="nucleotide sequence ID" value="XM_001265344.1"/>
</dbReference>
<dbReference type="SMR" id="A1D4V5"/>
<dbReference type="STRING" id="331117.A1D4V5"/>
<dbReference type="EnsemblFungi" id="EAW23448">
    <property type="protein sequence ID" value="EAW23448"/>
    <property type="gene ID" value="NFIA_021570"/>
</dbReference>
<dbReference type="GeneID" id="4591011"/>
<dbReference type="KEGG" id="nfi:NFIA_021570"/>
<dbReference type="VEuPathDB" id="FungiDB:NFIA_021570"/>
<dbReference type="eggNOG" id="KOG0354">
    <property type="taxonomic scope" value="Eukaryota"/>
</dbReference>
<dbReference type="HOGENOM" id="CLU_002513_0_0_1"/>
<dbReference type="OMA" id="FMMRAIF"/>
<dbReference type="OrthoDB" id="164902at2759"/>
<dbReference type="Proteomes" id="UP000006702">
    <property type="component" value="Unassembled WGS sequence"/>
</dbReference>
<dbReference type="GO" id="GO:0005634">
    <property type="term" value="C:nucleus"/>
    <property type="evidence" value="ECO:0007669"/>
    <property type="project" value="UniProtKB-SubCell"/>
</dbReference>
<dbReference type="GO" id="GO:0043138">
    <property type="term" value="F:3'-5' DNA helicase activity"/>
    <property type="evidence" value="ECO:0007669"/>
    <property type="project" value="InterPro"/>
</dbReference>
<dbReference type="GO" id="GO:0005524">
    <property type="term" value="F:ATP binding"/>
    <property type="evidence" value="ECO:0007669"/>
    <property type="project" value="UniProtKB-KW"/>
</dbReference>
<dbReference type="GO" id="GO:0016887">
    <property type="term" value="F:ATP hydrolysis activity"/>
    <property type="evidence" value="ECO:0007669"/>
    <property type="project" value="RHEA"/>
</dbReference>
<dbReference type="GO" id="GO:0000400">
    <property type="term" value="F:four-way junction DNA binding"/>
    <property type="evidence" value="ECO:0007669"/>
    <property type="project" value="TreeGrafter"/>
</dbReference>
<dbReference type="GO" id="GO:0009378">
    <property type="term" value="F:four-way junction helicase activity"/>
    <property type="evidence" value="ECO:0007669"/>
    <property type="project" value="TreeGrafter"/>
</dbReference>
<dbReference type="GO" id="GO:0045003">
    <property type="term" value="P:double-strand break repair via synthesis-dependent strand annealing"/>
    <property type="evidence" value="ECO:0007669"/>
    <property type="project" value="TreeGrafter"/>
</dbReference>
<dbReference type="GO" id="GO:0036297">
    <property type="term" value="P:interstrand cross-link repair"/>
    <property type="evidence" value="ECO:0007669"/>
    <property type="project" value="TreeGrafter"/>
</dbReference>
<dbReference type="CDD" id="cd18033">
    <property type="entry name" value="DEXDc_FANCM"/>
    <property type="match status" value="1"/>
</dbReference>
<dbReference type="CDD" id="cd12091">
    <property type="entry name" value="FANCM_ID"/>
    <property type="match status" value="1"/>
</dbReference>
<dbReference type="CDD" id="cd18801">
    <property type="entry name" value="SF2_C_FANCM_Hef"/>
    <property type="match status" value="1"/>
</dbReference>
<dbReference type="FunFam" id="3.40.50.300:FF:000861">
    <property type="entry name" value="Fanconi anemia, complementation group M"/>
    <property type="match status" value="1"/>
</dbReference>
<dbReference type="Gene3D" id="1.20.1320.20">
    <property type="entry name" value="hef helicase domain"/>
    <property type="match status" value="1"/>
</dbReference>
<dbReference type="Gene3D" id="3.40.50.300">
    <property type="entry name" value="P-loop containing nucleotide triphosphate hydrolases"/>
    <property type="match status" value="2"/>
</dbReference>
<dbReference type="InterPro" id="IPR039686">
    <property type="entry name" value="FANCM/Mph1-like_ID"/>
</dbReference>
<dbReference type="InterPro" id="IPR044749">
    <property type="entry name" value="FANCM_DEXDc"/>
</dbReference>
<dbReference type="InterPro" id="IPR006935">
    <property type="entry name" value="Helicase/UvrB_N"/>
</dbReference>
<dbReference type="InterPro" id="IPR014001">
    <property type="entry name" value="Helicase_ATP-bd"/>
</dbReference>
<dbReference type="InterPro" id="IPR001650">
    <property type="entry name" value="Helicase_C-like"/>
</dbReference>
<dbReference type="InterPro" id="IPR027417">
    <property type="entry name" value="P-loop_NTPase"/>
</dbReference>
<dbReference type="InterPro" id="IPR003903">
    <property type="entry name" value="UIM_dom"/>
</dbReference>
<dbReference type="PANTHER" id="PTHR14025">
    <property type="entry name" value="FANCONI ANEMIA GROUP M FANCM FAMILY MEMBER"/>
    <property type="match status" value="1"/>
</dbReference>
<dbReference type="PANTHER" id="PTHR14025:SF20">
    <property type="entry name" value="FANCONI ANEMIA GROUP M PROTEIN"/>
    <property type="match status" value="1"/>
</dbReference>
<dbReference type="Pfam" id="PF00271">
    <property type="entry name" value="Helicase_C"/>
    <property type="match status" value="1"/>
</dbReference>
<dbReference type="Pfam" id="PF04851">
    <property type="entry name" value="ResIII"/>
    <property type="match status" value="1"/>
</dbReference>
<dbReference type="SMART" id="SM00487">
    <property type="entry name" value="DEXDc"/>
    <property type="match status" value="1"/>
</dbReference>
<dbReference type="SMART" id="SM00490">
    <property type="entry name" value="HELICc"/>
    <property type="match status" value="1"/>
</dbReference>
<dbReference type="SUPFAM" id="SSF52540">
    <property type="entry name" value="P-loop containing nucleoside triphosphate hydrolases"/>
    <property type="match status" value="1"/>
</dbReference>
<dbReference type="PROSITE" id="PS51192">
    <property type="entry name" value="HELICASE_ATP_BIND_1"/>
    <property type="match status" value="1"/>
</dbReference>
<dbReference type="PROSITE" id="PS51194">
    <property type="entry name" value="HELICASE_CTER"/>
    <property type="match status" value="1"/>
</dbReference>
<comment type="function">
    <text evidence="2">ATP-dependent DNA helicase involved in DNA damage repair by homologous recombination and in genome maintenance. Capable of unwinding D-loops. Plays a role in limiting crossover recombinants during mitotic DNA double-strand break (DSB) repair. Component of a FANCM-MHF complex which promotes gene conversion at blocked replication forks, probably by reversal of the stalled fork.</text>
</comment>
<comment type="catalytic activity">
    <reaction evidence="2">
        <text>ATP + H2O = ADP + phosphate + H(+)</text>
        <dbReference type="Rhea" id="RHEA:13065"/>
        <dbReference type="ChEBI" id="CHEBI:15377"/>
        <dbReference type="ChEBI" id="CHEBI:15378"/>
        <dbReference type="ChEBI" id="CHEBI:30616"/>
        <dbReference type="ChEBI" id="CHEBI:43474"/>
        <dbReference type="ChEBI" id="CHEBI:456216"/>
        <dbReference type="EC" id="3.6.4.12"/>
    </reaction>
</comment>
<comment type="subunit">
    <text evidence="2">Interacts with the MHF histone-fold complex to form the FANCM-MHF complex.</text>
</comment>
<comment type="subcellular location">
    <subcellularLocation>
        <location evidence="1">Nucleus</location>
    </subcellularLocation>
</comment>
<comment type="similarity">
    <text evidence="6">Belongs to the DEAD box helicase family. DEAH subfamily. FANCM sub-subfamily.</text>
</comment>
<protein>
    <recommendedName>
        <fullName evidence="1">ATP-dependent DNA helicase mph1</fullName>
        <ecNumber evidence="1 2">3.6.4.12</ecNumber>
    </recommendedName>
    <alternativeName>
        <fullName evidence="2">FANCM-like protein 1</fullName>
    </alternativeName>
</protein>
<organism>
    <name type="scientific">Neosartorya fischeri (strain ATCC 1020 / DSM 3700 / CBS 544.65 / FGSC A1164 / JCM 1740 / NRRL 181 / WB 181)</name>
    <name type="common">Aspergillus fischerianus</name>
    <dbReference type="NCBI Taxonomy" id="331117"/>
    <lineage>
        <taxon>Eukaryota</taxon>
        <taxon>Fungi</taxon>
        <taxon>Dikarya</taxon>
        <taxon>Ascomycota</taxon>
        <taxon>Pezizomycotina</taxon>
        <taxon>Eurotiomycetes</taxon>
        <taxon>Eurotiomycetidae</taxon>
        <taxon>Eurotiales</taxon>
        <taxon>Aspergillaceae</taxon>
        <taxon>Aspergillus</taxon>
        <taxon>Aspergillus subgen. Fumigati</taxon>
    </lineage>
</organism>
<name>MPH1_NEOFI</name>
<keyword id="KW-0067">ATP-binding</keyword>
<keyword id="KW-0227">DNA damage</keyword>
<keyword id="KW-0234">DNA repair</keyword>
<keyword id="KW-0238">DNA-binding</keyword>
<keyword id="KW-0347">Helicase</keyword>
<keyword id="KW-0378">Hydrolase</keyword>
<keyword id="KW-0547">Nucleotide-binding</keyword>
<keyword id="KW-0539">Nucleus</keyword>
<keyword id="KW-1185">Reference proteome</keyword>
<evidence type="ECO:0000250" key="1">
    <source>
        <dbReference type="UniProtKB" id="P40562"/>
    </source>
</evidence>
<evidence type="ECO:0000250" key="2">
    <source>
        <dbReference type="UniProtKB" id="Q9UT23"/>
    </source>
</evidence>
<evidence type="ECO:0000255" key="3">
    <source>
        <dbReference type="PROSITE-ProRule" id="PRU00541"/>
    </source>
</evidence>
<evidence type="ECO:0000255" key="4">
    <source>
        <dbReference type="PROSITE-ProRule" id="PRU00542"/>
    </source>
</evidence>
<evidence type="ECO:0000256" key="5">
    <source>
        <dbReference type="SAM" id="MobiDB-lite"/>
    </source>
</evidence>
<evidence type="ECO:0000305" key="6"/>
<proteinExistence type="inferred from homology"/>
<reference key="1">
    <citation type="journal article" date="2008" name="PLoS Genet.">
        <title>Genomic islands in the pathogenic filamentous fungus Aspergillus fumigatus.</title>
        <authorList>
            <person name="Fedorova N.D."/>
            <person name="Khaldi N."/>
            <person name="Joardar V.S."/>
            <person name="Maiti R."/>
            <person name="Amedeo P."/>
            <person name="Anderson M.J."/>
            <person name="Crabtree J."/>
            <person name="Silva J.C."/>
            <person name="Badger J.H."/>
            <person name="Albarraq A."/>
            <person name="Angiuoli S."/>
            <person name="Bussey H."/>
            <person name="Bowyer P."/>
            <person name="Cotty P.J."/>
            <person name="Dyer P.S."/>
            <person name="Egan A."/>
            <person name="Galens K."/>
            <person name="Fraser-Liggett C.M."/>
            <person name="Haas B.J."/>
            <person name="Inman J.M."/>
            <person name="Kent R."/>
            <person name="Lemieux S."/>
            <person name="Malavazi I."/>
            <person name="Orvis J."/>
            <person name="Roemer T."/>
            <person name="Ronning C.M."/>
            <person name="Sundaram J.P."/>
            <person name="Sutton G."/>
            <person name="Turner G."/>
            <person name="Venter J.C."/>
            <person name="White O.R."/>
            <person name="Whitty B.R."/>
            <person name="Youngman P."/>
            <person name="Wolfe K.H."/>
            <person name="Goldman G.H."/>
            <person name="Wortman J.R."/>
            <person name="Jiang B."/>
            <person name="Denning D.W."/>
            <person name="Nierman W.C."/>
        </authorList>
    </citation>
    <scope>NUCLEOTIDE SEQUENCE [LARGE SCALE GENOMIC DNA]</scope>
    <source>
        <strain>ATCC 1020 / DSM 3700 / CBS 544.65 / FGSC A1164 / JCM 1740 / NRRL 181 / WB 181</strain>
    </source>
</reference>
<gene>
    <name evidence="1" type="primary">mph1</name>
    <name type="ORF">NFIA_021570</name>
</gene>
<feature type="chain" id="PRO_0000333377" description="ATP-dependent DNA helicase mph1">
    <location>
        <begin position="1"/>
        <end position="1111"/>
    </location>
</feature>
<feature type="domain" description="Helicase ATP-binding" evidence="3">
    <location>
        <begin position="306"/>
        <end position="474"/>
    </location>
</feature>
<feature type="domain" description="Helicase C-terminal" evidence="4">
    <location>
        <begin position="644"/>
        <end position="818"/>
    </location>
</feature>
<feature type="region of interest" description="Disordered" evidence="5">
    <location>
        <begin position="1"/>
        <end position="81"/>
    </location>
</feature>
<feature type="region of interest" description="Disordered" evidence="5">
    <location>
        <begin position="101"/>
        <end position="144"/>
    </location>
</feature>
<feature type="region of interest" description="Disordered" evidence="5">
    <location>
        <begin position="210"/>
        <end position="240"/>
    </location>
</feature>
<feature type="region of interest" description="Disordered" evidence="5">
    <location>
        <begin position="259"/>
        <end position="280"/>
    </location>
</feature>
<feature type="region of interest" description="Disordered" evidence="5">
    <location>
        <begin position="836"/>
        <end position="898"/>
    </location>
</feature>
<feature type="region of interest" description="Disordered" evidence="5">
    <location>
        <begin position="998"/>
        <end position="1047"/>
    </location>
</feature>
<feature type="region of interest" description="Disordered" evidence="5">
    <location>
        <begin position="1092"/>
        <end position="1111"/>
    </location>
</feature>
<feature type="short sequence motif" description="DEAH box" evidence="3">
    <location>
        <begin position="422"/>
        <end position="425"/>
    </location>
</feature>
<feature type="compositionally biased region" description="Acidic residues" evidence="5">
    <location>
        <begin position="1"/>
        <end position="18"/>
    </location>
</feature>
<feature type="compositionally biased region" description="Acidic residues" evidence="5">
    <location>
        <begin position="47"/>
        <end position="65"/>
    </location>
</feature>
<feature type="compositionally biased region" description="Polar residues" evidence="5">
    <location>
        <begin position="132"/>
        <end position="143"/>
    </location>
</feature>
<feature type="compositionally biased region" description="Polar residues" evidence="5">
    <location>
        <begin position="215"/>
        <end position="238"/>
    </location>
</feature>
<feature type="compositionally biased region" description="Basic residues" evidence="5">
    <location>
        <begin position="852"/>
        <end position="864"/>
    </location>
</feature>
<feature type="binding site" evidence="3">
    <location>
        <begin position="319"/>
        <end position="326"/>
    </location>
    <ligand>
        <name>ATP</name>
        <dbReference type="ChEBI" id="CHEBI:30616"/>
    </ligand>
</feature>
<sequence>MSVSGDDSDDYFDHEIDDVIVPGTPDAVKSAQTDNRPAKRRRLDAGVFDESDISIDQGDGEDEFQSPDRRSVNAVQSEDVERTSKYKVFVPKRKNFQENIFVTQLTQPPSPPEMIRGPRWKKPGPEPLAPKPTTTTVDASHQPDQYYDEDKEIEAAIAASLRSFEEENGGNIPSTASRSTPALTAVAPSAALKEAAADVPFNLDDIPDDAFDSDLSLSPPRTTSQATRGPPVQSQFRTNRPLGLRQSTLFDMAARNSDIPSQRGEQILSPPEKNEPPTHHKLNEEAINTWVYPTNLGKTRDYQFNIAQRGLFHNLLVALPTGLGKTFIAATIMLNWYRWTKSAQIIFVAPTKPLVAQQISACFQVAGIPRSQTTMLTGEAAPGIRAEEWKSKRVFFMTPQTLVNDLKSGIADPKRIVLLVVDEAHRATGGYAYVEVVKFLKRYNKSFRVLALTATPGSTVESVQAVIDGLGIAKVEIRTEQSLDIREYVHARDTEVQTFKNSDEMVLCMELFTRTLQPLVDQLRNLNAYWGRDPMALTAFGLTKARQQWMGSDAGRNANLGLKGKVNAIFTVLASLAHAIDLLKYHGITPFYRHLLHFQSNTDGQKGGKYQRQIVQDESFKKLMNHLQPWTKNPEFIGHPKLEYLKQVVLNHFMDRGEGTAANGDQSQSATRIMIFVHFRDSAEEVVRVLKRYEPLIRPHVFVGQSSAKGSEGMDQKTQLSIVQKFKKGTYNTIVATSIGEEGLDIGEVDLIVCYDSSASPIRMLQRMGRTGRKRAGNIVLLLMQGKEEESYIKAKDNYEKMQQMIASGTRFTFHDDTSPRILPPGVRPVAEKRQIDIPVENTQADLPEPRKRARPPKRPPKKFHMPDDVETGFAKASSLTGKVTKKAETKKAVRKPTPEPVEVPALEEVLLTPGEQQDLERRYCHIGGTSPEFIRNPRVDAYPRLQSVPRPTKAIKHGSLTSRMIGTLQKMSKVSVDCERRYRKVLALESSKEIVDSVLSREPGSPAQNSGRLGKKPHAFKRPSATSRPNNVHVREDENEDNCTPELLSPEKLMSSFLEPHTERPPYSSQRSQDAFELDFPDVETLLNRSAERHVSRKRNRFVLDDDTEE</sequence>
<accession>A1D4V5</accession>